<comment type="function">
    <text>Involved in protein-protein interactions that result in protein complexes, receptor-ligand binding or cell adhesion.</text>
</comment>
<comment type="subunit">
    <text evidence="13">Forms a ternary complex with IGF1 and IGFBP3 (PubMed:35907924).</text>
</comment>
<comment type="subcellular location">
    <subcellularLocation>
        <location>Secreted</location>
        <location>Extracellular space</location>
    </subcellularLocation>
</comment>
<comment type="alternative products">
    <event type="alternative splicing"/>
    <isoform>
        <id>P35858-1</id>
        <name>1</name>
        <sequence type="displayed"/>
    </isoform>
    <isoform>
        <id>P35858-2</id>
        <name>2</name>
        <sequence type="described" ref="VSP_044605"/>
    </isoform>
</comment>
<comment type="tissue specificity">
    <text>Plasma.</text>
</comment>
<comment type="disease" evidence="2 4 5 6 7 9 10 11">
    <disease id="DI-04198">
        <name>Acid-labile subunit deficiency</name>
        <acronym>ACLSD</acronym>
        <description>A disorder characterized by severely reduced serum IGF-I and IGFBP-3 concentrations and mild growth retardation. Pubertal delay in boys and insulin insensitivity are common findings.</description>
        <dbReference type="MIM" id="615961"/>
    </disease>
    <text>The disease is caused by variants affecting the gene represented in this entry.</text>
</comment>
<evidence type="ECO:0000255" key="1"/>
<evidence type="ECO:0000269" key="2">
    <source>
    </source>
</evidence>
<evidence type="ECO:0000269" key="3">
    <source>
    </source>
</evidence>
<evidence type="ECO:0000269" key="4">
    <source>
    </source>
</evidence>
<evidence type="ECO:0000269" key="5">
    <source>
    </source>
</evidence>
<evidence type="ECO:0000269" key="6">
    <source>
    </source>
</evidence>
<evidence type="ECO:0000269" key="7">
    <source>
    </source>
</evidence>
<evidence type="ECO:0000269" key="8">
    <source>
    </source>
</evidence>
<evidence type="ECO:0000269" key="9">
    <source>
    </source>
</evidence>
<evidence type="ECO:0000269" key="10">
    <source>
    </source>
</evidence>
<evidence type="ECO:0000269" key="11">
    <source>
    </source>
</evidence>
<evidence type="ECO:0000269" key="12">
    <source>
    </source>
</evidence>
<evidence type="ECO:0000269" key="13">
    <source>
    </source>
</evidence>
<evidence type="ECO:0000303" key="14">
    <source>
    </source>
</evidence>
<evidence type="ECO:0000305" key="15"/>
<evidence type="ECO:0007744" key="16">
    <source>
        <dbReference type="PDB" id="7WRQ"/>
    </source>
</evidence>
<sequence length="605" mass="66035">MALRKGGLALALLLLSWVALGPRSLEGADPGTPGEAEGPACPAACVCSYDDDADELSVFCSSRNLTRLPDGVPGGTQALWLDGNNLSSVPPAAFQNLSSLGFLNLQGGQLGSLEPQALLGLENLCHLHLERNQLRSLALGTFAHTPALASLGLSNNRLSRLEDGLFEGLGSLWDLNLGWNSLAVLPDAAFRGLGSLRELVLAGNRLAYLQPALFSGLAELRELDLSRNALRAIKANVFVQLPRLQKLYLDRNLIAAVAPGAFLGLKALRWLDLSHNRVAGLLEDTFPGLLGLRVLRLSHNAIASLRPRTFKDLHFLEELQLGHNRIRQLAERSFEGLGQLEVLTLDHNQLQEVKAGAFLGLTNVAVMNLSGNCLRNLPEQVFRGLGKLHSLHLEGSCLGRIRPHTFTGLSGLRRLFLKDNGLVGIEEQSLWGLAELLELDLTSNQLTHLPHRLFQGLGKLEYLLLSRNRLAELPADALGPLQRAFWLDVSHNRLEALPNSLLAPLGRLRYLSLRNNSLRTFTPQPPGLERLWLEGNPWDCGCPLKALRDFALQNPSAVPRFVQAICEGDDCQPPAYTYNNITCASPPEVVGLDLRDLSEAHFAPC</sequence>
<reference key="1">
    <citation type="journal article" date="1992" name="Mol. Endocrinol.">
        <title>Structure and functional expression of the acid-labile subunit of the insulin-like growth factor-binding protein complex.</title>
        <authorList>
            <person name="Leong S.R."/>
            <person name="Baxter R.C."/>
            <person name="Camerato T."/>
            <person name="Dai J."/>
            <person name="Wood W.I."/>
        </authorList>
    </citation>
    <scope>NUCLEOTIDE SEQUENCE [MRNA] (ISOFORM 1)</scope>
    <scope>PARTIAL PROTEIN SEQUENCE</scope>
    <source>
        <tissue>Liver</tissue>
    </source>
</reference>
<reference key="2">
    <citation type="journal article" date="2000" name="Endocrinology">
        <title>Conservation of a growth hormone-responsive promoter element in the human and mouse acid-labile subunit genes.</title>
        <authorList>
            <person name="Suwanichkul A."/>
            <person name="Boisclair Y.R."/>
            <person name="Olney R.C."/>
            <person name="Durham S.K."/>
            <person name="Powell D.R."/>
        </authorList>
    </citation>
    <scope>NUCLEOTIDE SEQUENCE [GENOMIC DNA]</scope>
</reference>
<reference key="3">
    <citation type="journal article" date="2004" name="Nat. Genet.">
        <title>Complete sequencing and characterization of 21,243 full-length human cDNAs.</title>
        <authorList>
            <person name="Ota T."/>
            <person name="Suzuki Y."/>
            <person name="Nishikawa T."/>
            <person name="Otsuki T."/>
            <person name="Sugiyama T."/>
            <person name="Irie R."/>
            <person name="Wakamatsu A."/>
            <person name="Hayashi K."/>
            <person name="Sato H."/>
            <person name="Nagai K."/>
            <person name="Kimura K."/>
            <person name="Makita H."/>
            <person name="Sekine M."/>
            <person name="Obayashi M."/>
            <person name="Nishi T."/>
            <person name="Shibahara T."/>
            <person name="Tanaka T."/>
            <person name="Ishii S."/>
            <person name="Yamamoto J."/>
            <person name="Saito K."/>
            <person name="Kawai Y."/>
            <person name="Isono Y."/>
            <person name="Nakamura Y."/>
            <person name="Nagahari K."/>
            <person name="Murakami K."/>
            <person name="Yasuda T."/>
            <person name="Iwayanagi T."/>
            <person name="Wagatsuma M."/>
            <person name="Shiratori A."/>
            <person name="Sudo H."/>
            <person name="Hosoiri T."/>
            <person name="Kaku Y."/>
            <person name="Kodaira H."/>
            <person name="Kondo H."/>
            <person name="Sugawara M."/>
            <person name="Takahashi M."/>
            <person name="Kanda K."/>
            <person name="Yokoi T."/>
            <person name="Furuya T."/>
            <person name="Kikkawa E."/>
            <person name="Omura Y."/>
            <person name="Abe K."/>
            <person name="Kamihara K."/>
            <person name="Katsuta N."/>
            <person name="Sato K."/>
            <person name="Tanikawa M."/>
            <person name="Yamazaki M."/>
            <person name="Ninomiya K."/>
            <person name="Ishibashi T."/>
            <person name="Yamashita H."/>
            <person name="Murakawa K."/>
            <person name="Fujimori K."/>
            <person name="Tanai H."/>
            <person name="Kimata M."/>
            <person name="Watanabe M."/>
            <person name="Hiraoka S."/>
            <person name="Chiba Y."/>
            <person name="Ishida S."/>
            <person name="Ono Y."/>
            <person name="Takiguchi S."/>
            <person name="Watanabe S."/>
            <person name="Yosida M."/>
            <person name="Hotuta T."/>
            <person name="Kusano J."/>
            <person name="Kanehori K."/>
            <person name="Takahashi-Fujii A."/>
            <person name="Hara H."/>
            <person name="Tanase T.-O."/>
            <person name="Nomura Y."/>
            <person name="Togiya S."/>
            <person name="Komai F."/>
            <person name="Hara R."/>
            <person name="Takeuchi K."/>
            <person name="Arita M."/>
            <person name="Imose N."/>
            <person name="Musashino K."/>
            <person name="Yuuki H."/>
            <person name="Oshima A."/>
            <person name="Sasaki N."/>
            <person name="Aotsuka S."/>
            <person name="Yoshikawa Y."/>
            <person name="Matsunawa H."/>
            <person name="Ichihara T."/>
            <person name="Shiohata N."/>
            <person name="Sano S."/>
            <person name="Moriya S."/>
            <person name="Momiyama H."/>
            <person name="Satoh N."/>
            <person name="Takami S."/>
            <person name="Terashima Y."/>
            <person name="Suzuki O."/>
            <person name="Nakagawa S."/>
            <person name="Senoh A."/>
            <person name="Mizoguchi H."/>
            <person name="Goto Y."/>
            <person name="Shimizu F."/>
            <person name="Wakebe H."/>
            <person name="Hishigaki H."/>
            <person name="Watanabe T."/>
            <person name="Sugiyama A."/>
            <person name="Takemoto M."/>
            <person name="Kawakami B."/>
            <person name="Yamazaki M."/>
            <person name="Watanabe K."/>
            <person name="Kumagai A."/>
            <person name="Itakura S."/>
            <person name="Fukuzumi Y."/>
            <person name="Fujimori Y."/>
            <person name="Komiyama M."/>
            <person name="Tashiro H."/>
            <person name="Tanigami A."/>
            <person name="Fujiwara T."/>
            <person name="Ono T."/>
            <person name="Yamada K."/>
            <person name="Fujii Y."/>
            <person name="Ozaki K."/>
            <person name="Hirao M."/>
            <person name="Ohmori Y."/>
            <person name="Kawabata A."/>
            <person name="Hikiji T."/>
            <person name="Kobatake N."/>
            <person name="Inagaki H."/>
            <person name="Ikema Y."/>
            <person name="Okamoto S."/>
            <person name="Okitani R."/>
            <person name="Kawakami T."/>
            <person name="Noguchi S."/>
            <person name="Itoh T."/>
            <person name="Shigeta K."/>
            <person name="Senba T."/>
            <person name="Matsumura K."/>
            <person name="Nakajima Y."/>
            <person name="Mizuno T."/>
            <person name="Morinaga M."/>
            <person name="Sasaki M."/>
            <person name="Togashi T."/>
            <person name="Oyama M."/>
            <person name="Hata H."/>
            <person name="Watanabe M."/>
            <person name="Komatsu T."/>
            <person name="Mizushima-Sugano J."/>
            <person name="Satoh T."/>
            <person name="Shirai Y."/>
            <person name="Takahashi Y."/>
            <person name="Nakagawa K."/>
            <person name="Okumura K."/>
            <person name="Nagase T."/>
            <person name="Nomura N."/>
            <person name="Kikuchi H."/>
            <person name="Masuho Y."/>
            <person name="Yamashita R."/>
            <person name="Nakai K."/>
            <person name="Yada T."/>
            <person name="Nakamura Y."/>
            <person name="Ohara O."/>
            <person name="Isogai T."/>
            <person name="Sugano S."/>
        </authorList>
    </citation>
    <scope>NUCLEOTIDE SEQUENCE [LARGE SCALE MRNA] (ISOFORM 2)</scope>
    <source>
        <tissue>Thymus</tissue>
    </source>
</reference>
<reference key="4">
    <citation type="journal article" date="2004" name="Nature">
        <title>The sequence and analysis of duplication-rich human chromosome 16.</title>
        <authorList>
            <person name="Martin J."/>
            <person name="Han C."/>
            <person name="Gordon L.A."/>
            <person name="Terry A."/>
            <person name="Prabhakar S."/>
            <person name="She X."/>
            <person name="Xie G."/>
            <person name="Hellsten U."/>
            <person name="Chan Y.M."/>
            <person name="Altherr M."/>
            <person name="Couronne O."/>
            <person name="Aerts A."/>
            <person name="Bajorek E."/>
            <person name="Black S."/>
            <person name="Blumer H."/>
            <person name="Branscomb E."/>
            <person name="Brown N.C."/>
            <person name="Bruno W.J."/>
            <person name="Buckingham J.M."/>
            <person name="Callen D.F."/>
            <person name="Campbell C.S."/>
            <person name="Campbell M.L."/>
            <person name="Campbell E.W."/>
            <person name="Caoile C."/>
            <person name="Challacombe J.F."/>
            <person name="Chasteen L.A."/>
            <person name="Chertkov O."/>
            <person name="Chi H.C."/>
            <person name="Christensen M."/>
            <person name="Clark L.M."/>
            <person name="Cohn J.D."/>
            <person name="Denys M."/>
            <person name="Detter J.C."/>
            <person name="Dickson M."/>
            <person name="Dimitrijevic-Bussod M."/>
            <person name="Escobar J."/>
            <person name="Fawcett J.J."/>
            <person name="Flowers D."/>
            <person name="Fotopulos D."/>
            <person name="Glavina T."/>
            <person name="Gomez M."/>
            <person name="Gonzales E."/>
            <person name="Goodstein D."/>
            <person name="Goodwin L.A."/>
            <person name="Grady D.L."/>
            <person name="Grigoriev I."/>
            <person name="Groza M."/>
            <person name="Hammon N."/>
            <person name="Hawkins T."/>
            <person name="Haydu L."/>
            <person name="Hildebrand C.E."/>
            <person name="Huang W."/>
            <person name="Israni S."/>
            <person name="Jett J."/>
            <person name="Jewett P.B."/>
            <person name="Kadner K."/>
            <person name="Kimball H."/>
            <person name="Kobayashi A."/>
            <person name="Krawczyk M.-C."/>
            <person name="Leyba T."/>
            <person name="Longmire J.L."/>
            <person name="Lopez F."/>
            <person name="Lou Y."/>
            <person name="Lowry S."/>
            <person name="Ludeman T."/>
            <person name="Manohar C.F."/>
            <person name="Mark G.A."/>
            <person name="McMurray K.L."/>
            <person name="Meincke L.J."/>
            <person name="Morgan J."/>
            <person name="Moyzis R.K."/>
            <person name="Mundt M.O."/>
            <person name="Munk A.C."/>
            <person name="Nandkeshwar R.D."/>
            <person name="Pitluck S."/>
            <person name="Pollard M."/>
            <person name="Predki P."/>
            <person name="Parson-Quintana B."/>
            <person name="Ramirez L."/>
            <person name="Rash S."/>
            <person name="Retterer J."/>
            <person name="Ricke D.O."/>
            <person name="Robinson D.L."/>
            <person name="Rodriguez A."/>
            <person name="Salamov A."/>
            <person name="Saunders E.H."/>
            <person name="Scott D."/>
            <person name="Shough T."/>
            <person name="Stallings R.L."/>
            <person name="Stalvey M."/>
            <person name="Sutherland R.D."/>
            <person name="Tapia R."/>
            <person name="Tesmer J.G."/>
            <person name="Thayer N."/>
            <person name="Thompson L.S."/>
            <person name="Tice H."/>
            <person name="Torney D.C."/>
            <person name="Tran-Gyamfi M."/>
            <person name="Tsai M."/>
            <person name="Ulanovsky L.E."/>
            <person name="Ustaszewska A."/>
            <person name="Vo N."/>
            <person name="White P.S."/>
            <person name="Williams A.L."/>
            <person name="Wills P.L."/>
            <person name="Wu J.-R."/>
            <person name="Wu K."/>
            <person name="Yang J."/>
            <person name="DeJong P."/>
            <person name="Bruce D."/>
            <person name="Doggett N.A."/>
            <person name="Deaven L."/>
            <person name="Schmutz J."/>
            <person name="Grimwood J."/>
            <person name="Richardson P."/>
            <person name="Rokhsar D.S."/>
            <person name="Eichler E.E."/>
            <person name="Gilna P."/>
            <person name="Lucas S.M."/>
            <person name="Myers R.M."/>
            <person name="Rubin E.M."/>
            <person name="Pennacchio L.A."/>
        </authorList>
    </citation>
    <scope>NUCLEOTIDE SEQUENCE [LARGE SCALE GENOMIC DNA]</scope>
</reference>
<reference key="5">
    <citation type="journal article" date="1989" name="J. Biol. Chem.">
        <title>High molecular weight insulin-like growth factor binding protein complex. Purification and properties of the acid-labile subunit from human serum.</title>
        <authorList>
            <person name="Baxter R.C."/>
            <person name="Martin J.L."/>
            <person name="Beniac V.A."/>
        </authorList>
    </citation>
    <scope>PROTEIN SEQUENCE OF 28-35</scope>
</reference>
<reference key="6">
    <citation type="journal article" date="2004" name="N. Engl. J. Med.">
        <title>Deficiency of the circulating insulin-like growth factor system associated with inactivation of the acid-labile subunit gene.</title>
        <authorList>
            <person name="Domene H.M."/>
            <person name="Bengolea S.V."/>
            <person name="Martinez A.S."/>
            <person name="Ropelato M.G."/>
            <person name="Pennisi P."/>
            <person name="Scaglia P."/>
            <person name="Heinrich J.J."/>
            <person name="Jasper H.G."/>
        </authorList>
    </citation>
    <scope>INVOLVEMENT IN ACLSD</scope>
</reference>
<reference key="7">
    <citation type="journal article" date="2005" name="J. Proteome Res.">
        <title>Human plasma N-glycoproteome analysis by immunoaffinity subtraction, hydrazide chemistry, and mass spectrometry.</title>
        <authorList>
            <person name="Liu T."/>
            <person name="Qian W.-J."/>
            <person name="Gritsenko M.A."/>
            <person name="Camp D.G. II"/>
            <person name="Monroe M.E."/>
            <person name="Moore R.J."/>
            <person name="Smith R.D."/>
        </authorList>
    </citation>
    <scope>GLYCOSYLATION [LARGE SCALE ANALYSIS] AT ASN-368 AND ASN-515</scope>
    <source>
        <tissue>Plasma</tissue>
    </source>
</reference>
<reference key="8">
    <citation type="journal article" date="2006" name="J. Clin. Endocrinol. Metab.">
        <title>Total absence of functional acid labile subunit, resulting in severe insulin-like growth factor deficiency and moderate growth failure.</title>
        <authorList>
            <person name="Hwa V."/>
            <person name="Haeusler G."/>
            <person name="Pratt K.L."/>
            <person name="Little B.M."/>
            <person name="Frisch H."/>
            <person name="Koller D."/>
            <person name="Rosenfeld R.G."/>
        </authorList>
    </citation>
    <scope>VARIANT ACLSD ASN-440</scope>
</reference>
<reference key="9">
    <citation type="journal article" date="2007" name="J. Clin. Endocrinol. Metab.">
        <title>Phenotypic effects of null and haploinsufficiency of acid-labile subunit in a family with two novel IGFALS gene mutations.</title>
        <authorList>
            <person name="Domene H.M."/>
            <person name="Scaglia P.A."/>
            <person name="Lteif A."/>
            <person name="Mahmud F.H."/>
            <person name="Kirmani S."/>
            <person name="Frystyk J."/>
            <person name="Bedecarras P."/>
            <person name="Gutierrez M."/>
            <person name="Jasper H.G."/>
        </authorList>
    </citation>
    <scope>VARIANTS ACLSD SER-LEU-ARG-197 INS AND ARG-540</scope>
</reference>
<reference key="10">
    <citation type="journal article" date="2008" name="J. Clin. Endocrinol. Metab.">
        <title>Primary acid-labile subunit deficiency due to recessive IGFALS mutations results in postnatal growth deficit associated with low circulating insulin growth factor (IGF)-I, IGF binding protein-3 levels, and hyperinsulinemia.</title>
        <authorList>
            <person name="Heath K.E."/>
            <person name="Argente J."/>
            <person name="Barrios V."/>
            <person name="Pozo J."/>
            <person name="Diaz-Gonzalez F."/>
            <person name="Martos-Moreno G.A."/>
            <person name="Caimari M."/>
            <person name="Gracia R."/>
            <person name="Campos-Barros A."/>
        </authorList>
    </citation>
    <scope>VARIANT ACLSD SER-276</scope>
</reference>
<reference key="11">
    <citation type="journal article" date="2009" name="Horm. Res.">
        <title>Three novel IGFALS gene mutations resulting in total ALS and severe circulating IGF-I/IGFBP-3 deficiency in children of different ethnic origins.</title>
        <authorList>
            <person name="Fofanova-Gambetti O.V."/>
            <person name="Hwa V."/>
            <person name="Kirsch S."/>
            <person name="Pihoker C."/>
            <person name="Chiu H.K."/>
            <person name="Hogler W."/>
            <person name="Cohen L.E."/>
            <person name="Jacobsen C."/>
            <person name="Derr M.A."/>
            <person name="Rosenfeld R.G."/>
        </authorList>
    </citation>
    <scope>VARIANTS ACLSD SER-60; PHE-244 AND LEU-GLU-LEU-439 INS</scope>
</reference>
<reference key="12">
    <citation type="journal article" date="2009" name="J. Proteome Res.">
        <title>Glycoproteomics analysis of human liver tissue by combination of multiple enzyme digestion and hydrazide chemistry.</title>
        <authorList>
            <person name="Chen R."/>
            <person name="Jiang X."/>
            <person name="Sun D."/>
            <person name="Han G."/>
            <person name="Wang F."/>
            <person name="Ye M."/>
            <person name="Wang L."/>
            <person name="Zou H."/>
        </authorList>
    </citation>
    <scope>GLYCOSYLATION [LARGE SCALE ANALYSIS] AT ASN-368</scope>
    <source>
        <tissue>Liver</tissue>
    </source>
</reference>
<reference key="13">
    <citation type="journal article" date="2010" name="Horm. Res. Paediatr.">
        <title>Acid-labile subunit deficiency and growth failure: description of two novel cases.</title>
        <authorList>
            <person name="David A."/>
            <person name="Rose S.J."/>
            <person name="Miraki-Moud F."/>
            <person name="Metherell L.A."/>
            <person name="Savage M.O."/>
            <person name="Clark A.J."/>
            <person name="Camacho-Huebner C."/>
        </authorList>
    </citation>
    <scope>VARIANTS ACLSD LEU-73 AND GLN-134</scope>
</reference>
<reference key="14">
    <citation type="journal article" date="2011" name="Best Pract. Res. Clin. Endocrinol. Metab.">
        <title>Acid-labile subunit (ALS) deficiency.</title>
        <authorList>
            <person name="Domene H.M."/>
            <person name="Hwa V."/>
            <person name="Jasper H.G."/>
            <person name="Rosenfeld R.G."/>
        </authorList>
    </citation>
    <scope>INVOLVEMENT IN ACLSD</scope>
</reference>
<reference key="15">
    <citation type="journal article" date="2013" name="Clin. Endocrinol. (Oxf.)">
        <title>A novel mutation in IGFALS, c.380T&gt;C (p.L127P), associated with short stature, delayed puberty, osteopenia and hyperinsulinaemia in two siblings: insights into the roles of insulin growth factor-1 (IGF1).</title>
        <authorList>
            <person name="Hess O."/>
            <person name="Khayat M."/>
            <person name="Hwa V."/>
            <person name="Heath K.E."/>
            <person name="Teitler A."/>
            <person name="Hritan Y."/>
            <person name="Allon-Shalev S."/>
            <person name="Tenenbaum-Rakover Y."/>
        </authorList>
    </citation>
    <scope>VARIANT IN ACLSD PRO-127</scope>
</reference>
<reference evidence="16" key="16">
    <citation type="journal article" date="2022" name="Nat. Commun.">
        <title>Structural basis for assembly and disassembly of the IGF/IGFBP/ALS ternary complex.</title>
        <authorList>
            <person name="Kim H."/>
            <person name="Fu Y."/>
            <person name="Hong H.J."/>
            <person name="Lee S.G."/>
            <person name="Lee D.S."/>
            <person name="Kim H.M."/>
        </authorList>
    </citation>
    <scope>STRUCTURE BY ELECTRON MICROSCOPY (3.60 ANGSTROMS) OF 28-605</scope>
    <scope>DISULFIDE BONDS</scope>
    <scope>INTERACTION WITH IGFBP3 AND IGF1</scope>
</reference>
<keyword id="KW-0002">3D-structure</keyword>
<keyword id="KW-0025">Alternative splicing</keyword>
<keyword id="KW-0130">Cell adhesion</keyword>
<keyword id="KW-0903">Direct protein sequencing</keyword>
<keyword id="KW-0225">Disease variant</keyword>
<keyword id="KW-1015">Disulfide bond</keyword>
<keyword id="KW-0325">Glycoprotein</keyword>
<keyword id="KW-0433">Leucine-rich repeat</keyword>
<keyword id="KW-1267">Proteomics identification</keyword>
<keyword id="KW-1185">Reference proteome</keyword>
<keyword id="KW-0677">Repeat</keyword>
<keyword id="KW-0964">Secreted</keyword>
<keyword id="KW-0732">Signal</keyword>
<feature type="signal peptide" evidence="12">
    <location>
        <begin position="1"/>
        <end position="27"/>
    </location>
</feature>
<feature type="chain" id="PRO_0000020695" description="Insulin-like growth factor-binding protein complex acid labile subunit">
    <location>
        <begin position="28"/>
        <end position="605"/>
    </location>
</feature>
<feature type="domain" description="LRRNT">
    <location>
        <begin position="32"/>
        <end position="74"/>
    </location>
</feature>
<feature type="repeat" description="LRR 1">
    <location>
        <begin position="75"/>
        <end position="96"/>
    </location>
</feature>
<feature type="repeat" description="LRR 2">
    <location>
        <begin position="99"/>
        <end position="120"/>
    </location>
</feature>
<feature type="repeat" description="LRR 3">
    <location>
        <begin position="123"/>
        <end position="144"/>
    </location>
</feature>
<feature type="repeat" description="LRR 4">
    <location>
        <begin position="147"/>
        <end position="168"/>
    </location>
</feature>
<feature type="repeat" description="LRR 5">
    <location>
        <begin position="171"/>
        <end position="192"/>
    </location>
</feature>
<feature type="repeat" description="LRR 6">
    <location>
        <begin position="195"/>
        <end position="216"/>
    </location>
</feature>
<feature type="repeat" description="LRR 7">
    <location>
        <begin position="219"/>
        <end position="240"/>
    </location>
</feature>
<feature type="repeat" description="LRR 8">
    <location>
        <begin position="243"/>
        <end position="264"/>
    </location>
</feature>
<feature type="repeat" description="LRR 9">
    <location>
        <begin position="267"/>
        <end position="288"/>
    </location>
</feature>
<feature type="repeat" description="LRR 10">
    <location>
        <begin position="291"/>
        <end position="312"/>
    </location>
</feature>
<feature type="repeat" description="LRR 11">
    <location>
        <begin position="315"/>
        <end position="336"/>
    </location>
</feature>
<feature type="repeat" description="LRR 12">
    <location>
        <begin position="339"/>
        <end position="360"/>
    </location>
</feature>
<feature type="repeat" description="LRR 13">
    <location>
        <begin position="363"/>
        <end position="384"/>
    </location>
</feature>
<feature type="repeat" description="LRR 14">
    <location>
        <begin position="387"/>
        <end position="408"/>
    </location>
</feature>
<feature type="repeat" description="LRR 15">
    <location>
        <begin position="411"/>
        <end position="432"/>
    </location>
</feature>
<feature type="repeat" description="LRR 16">
    <location>
        <begin position="435"/>
        <end position="456"/>
    </location>
</feature>
<feature type="repeat" description="LRR 17">
    <location>
        <begin position="459"/>
        <end position="480"/>
    </location>
</feature>
<feature type="repeat" description="LRR 18">
    <location>
        <begin position="483"/>
        <end position="504"/>
    </location>
</feature>
<feature type="repeat" description="LRR 19">
    <location>
        <begin position="507"/>
        <end position="528"/>
    </location>
</feature>
<feature type="domain" description="LRRCT">
    <location>
        <begin position="536"/>
        <end position="605"/>
    </location>
</feature>
<feature type="glycosylation site" description="N-linked (GlcNAc...) asparagine" evidence="1">
    <location>
        <position position="64"/>
    </location>
</feature>
<feature type="glycosylation site" description="N-linked (GlcNAc...) asparagine" evidence="1">
    <location>
        <position position="85"/>
    </location>
</feature>
<feature type="glycosylation site" description="N-linked (GlcNAc...) asparagine" evidence="1">
    <location>
        <position position="96"/>
    </location>
</feature>
<feature type="glycosylation site" description="N-linked (GlcNAc...) asparagine" evidence="3 8">
    <location>
        <position position="368"/>
    </location>
</feature>
<feature type="glycosylation site" description="N-linked (GlcNAc...) asparagine" evidence="3">
    <location>
        <position position="515"/>
    </location>
</feature>
<feature type="glycosylation site" description="N-linked (GlcNAc...) asparagine" evidence="1">
    <location>
        <position position="580"/>
    </location>
</feature>
<feature type="disulfide bond" evidence="13 16">
    <location>
        <begin position="41"/>
        <end position="47"/>
    </location>
</feature>
<feature type="disulfide bond" evidence="13 16">
    <location>
        <begin position="45"/>
        <end position="60"/>
    </location>
</feature>
<feature type="disulfide bond" evidence="13 16">
    <location>
        <begin position="540"/>
        <end position="583"/>
    </location>
</feature>
<feature type="disulfide bond" evidence="13 16">
    <location>
        <begin position="542"/>
        <end position="605"/>
    </location>
</feature>
<feature type="disulfide bond" evidence="13 16">
    <location>
        <begin position="566"/>
        <end position="571"/>
    </location>
</feature>
<feature type="splice variant" id="VSP_044605" description="In isoform 2." evidence="14">
    <original>K</original>
    <variation>KAGDLEPQFTPERRFRLCWYQAHSGRALLGPPPQASPPA</variation>
    <location>
        <position position="5"/>
    </location>
</feature>
<feature type="sequence variant" id="VAR_072475" description="In ACLSD." evidence="7">
    <original>C</original>
    <variation>S</variation>
    <location>
        <position position="60"/>
    </location>
</feature>
<feature type="sequence variant" id="VAR_072476" description="In ACLSD; dbSNP:rs766004600." evidence="9">
    <original>P</original>
    <variation>L</variation>
    <location>
        <position position="73"/>
    </location>
</feature>
<feature type="sequence variant" id="VAR_050658" description="In dbSNP:rs35947557.">
    <original>L</original>
    <variation>F</variation>
    <location>
        <position position="97"/>
    </location>
</feature>
<feature type="sequence variant" id="VAR_074071" description="In ACLSD." evidence="11">
    <original>L</original>
    <variation>P</variation>
    <location>
        <position position="127"/>
    </location>
</feature>
<feature type="sequence variant" id="VAR_072477" description="In ACLSD." evidence="9">
    <original>L</original>
    <variation>Q</variation>
    <location>
        <position position="134"/>
    </location>
</feature>
<feature type="sequence variant" id="VAR_072478" description="In ACLSD." evidence="5">
    <original>R</original>
    <variation>RSLR</variation>
    <location>
        <position position="197"/>
    </location>
</feature>
<feature type="sequence variant" id="VAR_072479" description="In ACLSD; dbSNP:rs774634302." evidence="7">
    <original>L</original>
    <variation>F</variation>
    <location>
        <position position="244"/>
    </location>
</feature>
<feature type="sequence variant" id="VAR_072480" description="In ACLSD; dbSNP:rs551618643." evidence="6">
    <original>N</original>
    <variation>S</variation>
    <location>
        <position position="276"/>
    </location>
</feature>
<feature type="sequence variant" id="VAR_050659" description="In dbSNP:rs34297640.">
    <original>P</original>
    <variation>L</variation>
    <location>
        <position position="307"/>
    </location>
</feature>
<feature type="sequence variant" id="VAR_072481" description="In ACLSD." evidence="7">
    <original>L</original>
    <variation>LLEL</variation>
    <location>
        <position position="439"/>
    </location>
</feature>
<feature type="sequence variant" id="VAR_072482" description="In ACLSD; dbSNP:rs776840046." evidence="4">
    <original>D</original>
    <variation>N</variation>
    <location>
        <position position="440"/>
    </location>
</feature>
<feature type="sequence variant" id="VAR_022034" description="In dbSNP:rs9282730.">
    <original>P</original>
    <variation>S</variation>
    <location>
        <position position="498"/>
    </location>
</feature>
<feature type="sequence variant" id="VAR_072483" description="In ACLSD; dbSNP:rs121909247." evidence="5">
    <original>C</original>
    <variation>R</variation>
    <location>
        <position position="540"/>
    </location>
</feature>
<feature type="sequence variant" id="VAR_022035" description="In dbSNP:rs9282731.">
    <original>R</original>
    <variation>W</variation>
    <location>
        <position position="548"/>
    </location>
</feature>
<feature type="sequence conflict" description="In Ref. 3; BAG64250." evidence="15" ref="3">
    <original>L</original>
    <variation>P</variation>
    <location>
        <position position="10"/>
    </location>
</feature>
<organism>
    <name type="scientific">Homo sapiens</name>
    <name type="common">Human</name>
    <dbReference type="NCBI Taxonomy" id="9606"/>
    <lineage>
        <taxon>Eukaryota</taxon>
        <taxon>Metazoa</taxon>
        <taxon>Chordata</taxon>
        <taxon>Craniata</taxon>
        <taxon>Vertebrata</taxon>
        <taxon>Euteleostomi</taxon>
        <taxon>Mammalia</taxon>
        <taxon>Eutheria</taxon>
        <taxon>Euarchontoglires</taxon>
        <taxon>Primates</taxon>
        <taxon>Haplorrhini</taxon>
        <taxon>Catarrhini</taxon>
        <taxon>Hominidae</taxon>
        <taxon>Homo</taxon>
    </lineage>
</organism>
<gene>
    <name type="primary">IGFALS</name>
    <name type="synonym">ALS</name>
</gene>
<dbReference type="EMBL" id="M86826">
    <property type="protein sequence ID" value="AAA36047.1"/>
    <property type="molecule type" value="mRNA"/>
</dbReference>
<dbReference type="EMBL" id="AF192554">
    <property type="protein sequence ID" value="AAF06774.1"/>
    <property type="molecule type" value="Genomic_DNA"/>
</dbReference>
<dbReference type="EMBL" id="AK303146">
    <property type="protein sequence ID" value="BAG64250.1"/>
    <property type="molecule type" value="mRNA"/>
</dbReference>
<dbReference type="EMBL" id="AC012180">
    <property type="status" value="NOT_ANNOTATED_CDS"/>
    <property type="molecule type" value="Genomic_DNA"/>
</dbReference>
<dbReference type="EMBL" id="AL031724">
    <property type="protein sequence ID" value="CAC36078.1"/>
    <property type="molecule type" value="Genomic_DNA"/>
</dbReference>
<dbReference type="CCDS" id="CCDS10446.1">
    <molecule id="P35858-1"/>
</dbReference>
<dbReference type="CCDS" id="CCDS53982.1">
    <molecule id="P35858-2"/>
</dbReference>
<dbReference type="PIR" id="A41915">
    <property type="entry name" value="A41915"/>
</dbReference>
<dbReference type="RefSeq" id="NP_001139478.1">
    <molecule id="P35858-2"/>
    <property type="nucleotide sequence ID" value="NM_001146006.2"/>
</dbReference>
<dbReference type="RefSeq" id="NP_004961.1">
    <molecule id="P35858-1"/>
    <property type="nucleotide sequence ID" value="NM_004970.3"/>
</dbReference>
<dbReference type="PDB" id="7WRQ">
    <property type="method" value="EM"/>
    <property type="resolution" value="3.60 A"/>
    <property type="chains" value="A=28-605"/>
</dbReference>
<dbReference type="PDBsum" id="7WRQ"/>
<dbReference type="EMDB" id="EMD-32735"/>
<dbReference type="SMR" id="P35858"/>
<dbReference type="BioGRID" id="109704">
    <property type="interactions" value="41"/>
</dbReference>
<dbReference type="CORUM" id="P35858"/>
<dbReference type="FunCoup" id="P35858">
    <property type="interactions" value="57"/>
</dbReference>
<dbReference type="IntAct" id="P35858">
    <property type="interactions" value="6"/>
</dbReference>
<dbReference type="STRING" id="9606.ENSP00000416683"/>
<dbReference type="DrugBank" id="DB09130">
    <property type="generic name" value="Copper"/>
</dbReference>
<dbReference type="DrugBank" id="DB01277">
    <property type="generic name" value="Mecasermin"/>
</dbReference>
<dbReference type="DrugBank" id="DB01593">
    <property type="generic name" value="Zinc"/>
</dbReference>
<dbReference type="DrugBank" id="DB14487">
    <property type="generic name" value="Zinc acetate"/>
</dbReference>
<dbReference type="DrugBank" id="DB14533">
    <property type="generic name" value="Zinc chloride"/>
</dbReference>
<dbReference type="DrugBank" id="DB14548">
    <property type="generic name" value="Zinc sulfate, unspecified form"/>
</dbReference>
<dbReference type="GlyConnect" id="1401">
    <property type="glycosylation" value="7 N-Linked glycans (2 sites)"/>
</dbReference>
<dbReference type="GlyCosmos" id="P35858">
    <property type="glycosylation" value="7 sites, 8 glycans"/>
</dbReference>
<dbReference type="GlyGen" id="P35858">
    <property type="glycosylation" value="7 sites, 16 N-linked glycans (2 sites), 1 O-linked glycan (1 site)"/>
</dbReference>
<dbReference type="iPTMnet" id="P35858"/>
<dbReference type="PhosphoSitePlus" id="P35858"/>
<dbReference type="BioMuta" id="IGFALS"/>
<dbReference type="DMDM" id="543800"/>
<dbReference type="CPTAC" id="non-CPTAC-2678"/>
<dbReference type="MassIVE" id="P35858"/>
<dbReference type="PaxDb" id="9606-ENSP00000416683"/>
<dbReference type="PeptideAtlas" id="P35858"/>
<dbReference type="ProteomicsDB" id="20394"/>
<dbReference type="ProteomicsDB" id="55158">
    <molecule id="P35858-1"/>
</dbReference>
<dbReference type="Antibodypedia" id="42497">
    <property type="antibodies" value="240 antibodies from 32 providers"/>
</dbReference>
<dbReference type="DNASU" id="3483"/>
<dbReference type="Ensembl" id="ENST00000215539.4">
    <molecule id="P35858-1"/>
    <property type="protein sequence ID" value="ENSP00000215539.3"/>
    <property type="gene ID" value="ENSG00000099769.6"/>
</dbReference>
<dbReference type="Ensembl" id="ENST00000415638.3">
    <molecule id="P35858-2"/>
    <property type="protein sequence ID" value="ENSP00000416683.3"/>
    <property type="gene ID" value="ENSG00000099769.6"/>
</dbReference>
<dbReference type="GeneID" id="3483"/>
<dbReference type="KEGG" id="hsa:3483"/>
<dbReference type="MANE-Select" id="ENST00000215539.4">
    <property type="protein sequence ID" value="ENSP00000215539.3"/>
    <property type="RefSeq nucleotide sequence ID" value="NM_004970.3"/>
    <property type="RefSeq protein sequence ID" value="NP_004961.1"/>
</dbReference>
<dbReference type="UCSC" id="uc002cmy.4">
    <molecule id="P35858-1"/>
    <property type="organism name" value="human"/>
</dbReference>
<dbReference type="AGR" id="HGNC:5468"/>
<dbReference type="CTD" id="3483"/>
<dbReference type="DisGeNET" id="3483"/>
<dbReference type="GeneCards" id="IGFALS"/>
<dbReference type="HGNC" id="HGNC:5468">
    <property type="gene designation" value="IGFALS"/>
</dbReference>
<dbReference type="HPA" id="ENSG00000099769">
    <property type="expression patterns" value="Tissue enriched (liver)"/>
</dbReference>
<dbReference type="MalaCards" id="IGFALS"/>
<dbReference type="MIM" id="601489">
    <property type="type" value="gene"/>
</dbReference>
<dbReference type="MIM" id="615961">
    <property type="type" value="phenotype"/>
</dbReference>
<dbReference type="neXtProt" id="NX_P35858"/>
<dbReference type="OpenTargets" id="ENSG00000099769"/>
<dbReference type="Orphanet" id="140941">
    <property type="disease" value="Short stature due to primary acid-labile subunit deficiency"/>
</dbReference>
<dbReference type="PharmGKB" id="PA29702"/>
<dbReference type="VEuPathDB" id="HostDB:ENSG00000099769"/>
<dbReference type="eggNOG" id="KOG0619">
    <property type="taxonomic scope" value="Eukaryota"/>
</dbReference>
<dbReference type="GeneTree" id="ENSGT00940000160824"/>
<dbReference type="HOGENOM" id="CLU_000288_18_6_1"/>
<dbReference type="InParanoid" id="P35858"/>
<dbReference type="OMA" id="TFLHTQN"/>
<dbReference type="OrthoDB" id="2013775at2759"/>
<dbReference type="PAN-GO" id="P35858">
    <property type="GO annotations" value="4 GO annotations based on evolutionary models"/>
</dbReference>
<dbReference type="PhylomeDB" id="P35858"/>
<dbReference type="TreeFam" id="TF351124"/>
<dbReference type="PathwayCommons" id="P35858"/>
<dbReference type="Reactome" id="R-HSA-381426">
    <property type="pathway name" value="Regulation of Insulin-like Growth Factor (IGF) transport and uptake by Insulin-like Growth Factor Binding Proteins (IGFBPs)"/>
</dbReference>
<dbReference type="SignaLink" id="P35858"/>
<dbReference type="BioGRID-ORCS" id="3483">
    <property type="hits" value="23 hits in 1146 CRISPR screens"/>
</dbReference>
<dbReference type="ChiTaRS" id="IGFALS">
    <property type="organism name" value="human"/>
</dbReference>
<dbReference type="GeneWiki" id="IGFALS"/>
<dbReference type="GenomeRNAi" id="3483"/>
<dbReference type="Pharos" id="P35858">
    <property type="development level" value="Tbio"/>
</dbReference>
<dbReference type="PRO" id="PR:P35858"/>
<dbReference type="Proteomes" id="UP000005640">
    <property type="component" value="Chromosome 16"/>
</dbReference>
<dbReference type="RNAct" id="P35858">
    <property type="molecule type" value="protein"/>
</dbReference>
<dbReference type="Bgee" id="ENSG00000099769">
    <property type="expression patterns" value="Expressed in right lobe of liver and 132 other cell types or tissues"/>
</dbReference>
<dbReference type="ExpressionAtlas" id="P35858">
    <property type="expression patterns" value="baseline and differential"/>
</dbReference>
<dbReference type="GO" id="GO:0070062">
    <property type="term" value="C:extracellular exosome"/>
    <property type="evidence" value="ECO:0007005"/>
    <property type="project" value="UniProtKB"/>
</dbReference>
<dbReference type="GO" id="GO:0031012">
    <property type="term" value="C:extracellular matrix"/>
    <property type="evidence" value="ECO:0000318"/>
    <property type="project" value="GO_Central"/>
</dbReference>
<dbReference type="GO" id="GO:0005576">
    <property type="term" value="C:extracellular region"/>
    <property type="evidence" value="ECO:0000304"/>
    <property type="project" value="Reactome"/>
</dbReference>
<dbReference type="GO" id="GO:0005615">
    <property type="term" value="C:extracellular space"/>
    <property type="evidence" value="ECO:0000318"/>
    <property type="project" value="GO_Central"/>
</dbReference>
<dbReference type="GO" id="GO:0042567">
    <property type="term" value="C:insulin-like growth factor ternary complex"/>
    <property type="evidence" value="ECO:0000314"/>
    <property type="project" value="BHF-UCL"/>
</dbReference>
<dbReference type="GO" id="GO:0005520">
    <property type="term" value="F:insulin-like growth factor binding"/>
    <property type="evidence" value="ECO:0000318"/>
    <property type="project" value="GO_Central"/>
</dbReference>
<dbReference type="GO" id="GO:0007155">
    <property type="term" value="P:cell adhesion"/>
    <property type="evidence" value="ECO:0007669"/>
    <property type="project" value="UniProtKB-KW"/>
</dbReference>
<dbReference type="GO" id="GO:0007165">
    <property type="term" value="P:signal transduction"/>
    <property type="evidence" value="ECO:0000304"/>
    <property type="project" value="ProtInc"/>
</dbReference>
<dbReference type="FunFam" id="3.80.10.10:FF:000540">
    <property type="entry name" value="Insulin-like growth factor-binding protein complex acid labile subunit"/>
    <property type="match status" value="1"/>
</dbReference>
<dbReference type="FunFam" id="3.80.10.10:FF:001264">
    <property type="entry name" value="Insulin-like growth factor-binding protein complex acid labile subunit"/>
    <property type="match status" value="1"/>
</dbReference>
<dbReference type="FunFam" id="3.80.10.10:FF:001833">
    <property type="entry name" value="Insulin-like growth factor-binding protein complex acid labile subunit"/>
    <property type="match status" value="1"/>
</dbReference>
<dbReference type="Gene3D" id="3.80.10.10">
    <property type="entry name" value="Ribonuclease Inhibitor"/>
    <property type="match status" value="3"/>
</dbReference>
<dbReference type="InterPro" id="IPR000483">
    <property type="entry name" value="Cys-rich_flank_reg_C"/>
</dbReference>
<dbReference type="InterPro" id="IPR050328">
    <property type="entry name" value="Dev_Immune_Receptor"/>
</dbReference>
<dbReference type="InterPro" id="IPR001611">
    <property type="entry name" value="Leu-rich_rpt"/>
</dbReference>
<dbReference type="InterPro" id="IPR003591">
    <property type="entry name" value="Leu-rich_rpt_typical-subtyp"/>
</dbReference>
<dbReference type="InterPro" id="IPR032675">
    <property type="entry name" value="LRR_dom_sf"/>
</dbReference>
<dbReference type="InterPro" id="IPR000372">
    <property type="entry name" value="LRRNT"/>
</dbReference>
<dbReference type="PANTHER" id="PTHR24373:SF285">
    <property type="entry name" value="INSULIN-LIKE GROWTH FACTOR-BINDING PROTEIN COMPLEX ACID LABILE SUBUNIT"/>
    <property type="match status" value="1"/>
</dbReference>
<dbReference type="PANTHER" id="PTHR24373">
    <property type="entry name" value="SLIT RELATED LEUCINE-RICH REPEAT NEURONAL PROTEIN"/>
    <property type="match status" value="1"/>
</dbReference>
<dbReference type="Pfam" id="PF00560">
    <property type="entry name" value="LRR_1"/>
    <property type="match status" value="2"/>
</dbReference>
<dbReference type="Pfam" id="PF13855">
    <property type="entry name" value="LRR_8"/>
    <property type="match status" value="4"/>
</dbReference>
<dbReference type="Pfam" id="PF01462">
    <property type="entry name" value="LRRNT"/>
    <property type="match status" value="1"/>
</dbReference>
<dbReference type="PRINTS" id="PR00019">
    <property type="entry name" value="LEURICHRPT"/>
</dbReference>
<dbReference type="SMART" id="SM00364">
    <property type="entry name" value="LRR_BAC"/>
    <property type="match status" value="5"/>
</dbReference>
<dbReference type="SMART" id="SM00369">
    <property type="entry name" value="LRR_TYP"/>
    <property type="match status" value="19"/>
</dbReference>
<dbReference type="SMART" id="SM00082">
    <property type="entry name" value="LRRCT"/>
    <property type="match status" value="1"/>
</dbReference>
<dbReference type="SMART" id="SM00013">
    <property type="entry name" value="LRRNT"/>
    <property type="match status" value="1"/>
</dbReference>
<dbReference type="SUPFAM" id="SSF52058">
    <property type="entry name" value="L domain-like"/>
    <property type="match status" value="2"/>
</dbReference>
<dbReference type="PROSITE" id="PS51450">
    <property type="entry name" value="LRR"/>
    <property type="match status" value="18"/>
</dbReference>
<protein>
    <recommendedName>
        <fullName>Insulin-like growth factor-binding protein complex acid labile subunit</fullName>
        <shortName>ALS</shortName>
    </recommendedName>
</protein>
<accession>P35858</accession>
<accession>B4DZY8</accession>
<accession>E9PGU3</accession>
<proteinExistence type="evidence at protein level"/>
<name>ALS_HUMAN</name>